<dbReference type="EC" id="3.2.2.-"/>
<dbReference type="EMBL" id="U00096">
    <property type="protein sequence ID" value="AAC75160.1"/>
    <property type="molecule type" value="Genomic_DNA"/>
</dbReference>
<dbReference type="EMBL" id="AP009048">
    <property type="protein sequence ID" value="BAE76585.1"/>
    <property type="molecule type" value="Genomic_DNA"/>
</dbReference>
<dbReference type="PIR" id="B64977">
    <property type="entry name" value="B64977"/>
</dbReference>
<dbReference type="RefSeq" id="NP_416602.1">
    <property type="nucleotide sequence ID" value="NC_000913.3"/>
</dbReference>
<dbReference type="RefSeq" id="WP_000846217.1">
    <property type="nucleotide sequence ID" value="NZ_SSUR01000003.1"/>
</dbReference>
<dbReference type="SMR" id="P76418"/>
<dbReference type="BioGRID" id="4261163">
    <property type="interactions" value="14"/>
</dbReference>
<dbReference type="DIP" id="DIP-11891N"/>
<dbReference type="FunCoup" id="P76418">
    <property type="interactions" value="298"/>
</dbReference>
<dbReference type="IntAct" id="P76418">
    <property type="interactions" value="4"/>
</dbReference>
<dbReference type="STRING" id="511145.b2099"/>
<dbReference type="PaxDb" id="511145-b2099"/>
<dbReference type="EnsemblBacteria" id="AAC75160">
    <property type="protein sequence ID" value="AAC75160"/>
    <property type="gene ID" value="b2099"/>
</dbReference>
<dbReference type="GeneID" id="946630"/>
<dbReference type="KEGG" id="ecj:JW2086"/>
<dbReference type="KEGG" id="eco:b2099"/>
<dbReference type="KEGG" id="ecoc:C3026_11780"/>
<dbReference type="PATRIC" id="fig|1411691.4.peg.148"/>
<dbReference type="EchoBASE" id="EB3817"/>
<dbReference type="eggNOG" id="COG1397">
    <property type="taxonomic scope" value="Bacteria"/>
</dbReference>
<dbReference type="HOGENOM" id="CLU_024566_3_0_6"/>
<dbReference type="InParanoid" id="P76418"/>
<dbReference type="OMA" id="HMEHVEA"/>
<dbReference type="OrthoDB" id="9798107at2"/>
<dbReference type="PhylomeDB" id="P76418"/>
<dbReference type="BioCyc" id="EcoCyc:G7131-MONOMER"/>
<dbReference type="PRO" id="PR:P76418"/>
<dbReference type="Proteomes" id="UP000000625">
    <property type="component" value="Chromosome"/>
</dbReference>
<dbReference type="GO" id="GO:0016787">
    <property type="term" value="F:hydrolase activity"/>
    <property type="evidence" value="ECO:0007669"/>
    <property type="project" value="UniProtKB-KW"/>
</dbReference>
<dbReference type="Gene3D" id="1.10.4080.10">
    <property type="entry name" value="ADP-ribosylation/Crystallin J1"/>
    <property type="match status" value="1"/>
</dbReference>
<dbReference type="InterPro" id="IPR050792">
    <property type="entry name" value="ADP-ribosylglycohydrolase"/>
</dbReference>
<dbReference type="InterPro" id="IPR005502">
    <property type="entry name" value="Ribosyl_crysJ1"/>
</dbReference>
<dbReference type="InterPro" id="IPR036705">
    <property type="entry name" value="Ribosyl_crysJ1_sf"/>
</dbReference>
<dbReference type="PANTHER" id="PTHR16222">
    <property type="entry name" value="ADP-RIBOSYLGLYCOHYDROLASE"/>
    <property type="match status" value="1"/>
</dbReference>
<dbReference type="PANTHER" id="PTHR16222:SF24">
    <property type="entry name" value="ADP-RIBOSYLHYDROLASE ARH3"/>
    <property type="match status" value="1"/>
</dbReference>
<dbReference type="Pfam" id="PF03747">
    <property type="entry name" value="ADP_ribosyl_GH"/>
    <property type="match status" value="1"/>
</dbReference>
<dbReference type="SUPFAM" id="SSF101478">
    <property type="entry name" value="ADP-ribosylglycohydrolase"/>
    <property type="match status" value="1"/>
</dbReference>
<protein>
    <recommendedName>
        <fullName>Uncharacterized protein YegU</fullName>
        <ecNumber>3.2.2.-</ecNumber>
    </recommendedName>
</protein>
<name>YEGU_ECOLI</name>
<gene>
    <name type="primary">yegU</name>
    <name type="ordered locus">b2099</name>
    <name type="ordered locus">JW2086</name>
</gene>
<keyword id="KW-0378">Hydrolase</keyword>
<keyword id="KW-1185">Reference proteome</keyword>
<feature type="chain" id="PRO_0000157287" description="Uncharacterized protein YegU">
    <location>
        <begin position="1"/>
        <end position="334"/>
    </location>
</feature>
<evidence type="ECO:0000305" key="1"/>
<proteinExistence type="inferred from homology"/>
<accession>P76418</accession>
<accession>Q2MAX1</accession>
<sequence>MKTERILGALYGQALGDAMGMPSELWPRSRVKAHFGWIDRFLPGPKENNAACYFNRAEFTDDTSMALCLADALLEREGKIDPDLIGRNILDWALRFDAFNKNVLGPTSKIALNAIRDGKPVAELENNGVTNGAAMRVSPLGCLLPARDVDSFIDDVALASSPTHKSDLAVAGAVVIAWAISRAIDGESWSAIVDSLPSIARHAQQKRITTFSASLAARLEIALKIVRNADGTESASEQLYQVVGAGTSTIESVPCAIALVELAQTDPNRCAVLCANLGGDTDTIGAMATAICGALHGVNAIDPALKAELDAVNQLDFNRYATALAKYRQQREAV</sequence>
<comment type="similarity">
    <text evidence="1">Belongs to the ADP-ribosylglycohydrolase family.</text>
</comment>
<reference key="1">
    <citation type="journal article" date="1997" name="Science">
        <title>The complete genome sequence of Escherichia coli K-12.</title>
        <authorList>
            <person name="Blattner F.R."/>
            <person name="Plunkett G. III"/>
            <person name="Bloch C.A."/>
            <person name="Perna N.T."/>
            <person name="Burland V."/>
            <person name="Riley M."/>
            <person name="Collado-Vides J."/>
            <person name="Glasner J.D."/>
            <person name="Rode C.K."/>
            <person name="Mayhew G.F."/>
            <person name="Gregor J."/>
            <person name="Davis N.W."/>
            <person name="Kirkpatrick H.A."/>
            <person name="Goeden M.A."/>
            <person name="Rose D.J."/>
            <person name="Mau B."/>
            <person name="Shao Y."/>
        </authorList>
    </citation>
    <scope>NUCLEOTIDE SEQUENCE [LARGE SCALE GENOMIC DNA]</scope>
    <source>
        <strain>K12 / MG1655 / ATCC 47076</strain>
    </source>
</reference>
<reference key="2">
    <citation type="journal article" date="2006" name="Mol. Syst. Biol.">
        <title>Highly accurate genome sequences of Escherichia coli K-12 strains MG1655 and W3110.</title>
        <authorList>
            <person name="Hayashi K."/>
            <person name="Morooka N."/>
            <person name="Yamamoto Y."/>
            <person name="Fujita K."/>
            <person name="Isono K."/>
            <person name="Choi S."/>
            <person name="Ohtsubo E."/>
            <person name="Baba T."/>
            <person name="Wanner B.L."/>
            <person name="Mori H."/>
            <person name="Horiuchi T."/>
        </authorList>
    </citation>
    <scope>NUCLEOTIDE SEQUENCE [LARGE SCALE GENOMIC DNA]</scope>
    <source>
        <strain>K12 / W3110 / ATCC 27325 / DSM 5911</strain>
    </source>
</reference>
<organism>
    <name type="scientific">Escherichia coli (strain K12)</name>
    <dbReference type="NCBI Taxonomy" id="83333"/>
    <lineage>
        <taxon>Bacteria</taxon>
        <taxon>Pseudomonadati</taxon>
        <taxon>Pseudomonadota</taxon>
        <taxon>Gammaproteobacteria</taxon>
        <taxon>Enterobacterales</taxon>
        <taxon>Enterobacteriaceae</taxon>
        <taxon>Escherichia</taxon>
    </lineage>
</organism>